<name>DCUP_CORDI</name>
<dbReference type="EC" id="4.1.1.37" evidence="1"/>
<dbReference type="EMBL" id="BX248355">
    <property type="protein sequence ID" value="CAE48911.1"/>
    <property type="molecule type" value="Genomic_DNA"/>
</dbReference>
<dbReference type="SMR" id="Q6NJJ4"/>
<dbReference type="STRING" id="257309.DIP0407"/>
<dbReference type="KEGG" id="cdi:DIP0407"/>
<dbReference type="HOGENOM" id="CLU_040933_0_1_11"/>
<dbReference type="UniPathway" id="UPA00251">
    <property type="reaction ID" value="UER00321"/>
</dbReference>
<dbReference type="Proteomes" id="UP000002198">
    <property type="component" value="Chromosome"/>
</dbReference>
<dbReference type="GO" id="GO:0005829">
    <property type="term" value="C:cytosol"/>
    <property type="evidence" value="ECO:0007669"/>
    <property type="project" value="TreeGrafter"/>
</dbReference>
<dbReference type="GO" id="GO:0004853">
    <property type="term" value="F:uroporphyrinogen decarboxylase activity"/>
    <property type="evidence" value="ECO:0007669"/>
    <property type="project" value="UniProtKB-UniRule"/>
</dbReference>
<dbReference type="GO" id="GO:0006782">
    <property type="term" value="P:protoporphyrinogen IX biosynthetic process"/>
    <property type="evidence" value="ECO:0007669"/>
    <property type="project" value="UniProtKB-UniRule"/>
</dbReference>
<dbReference type="CDD" id="cd00717">
    <property type="entry name" value="URO-D"/>
    <property type="match status" value="1"/>
</dbReference>
<dbReference type="Gene3D" id="3.20.20.210">
    <property type="match status" value="1"/>
</dbReference>
<dbReference type="HAMAP" id="MF_00218">
    <property type="entry name" value="URO_D"/>
    <property type="match status" value="1"/>
</dbReference>
<dbReference type="InterPro" id="IPR038071">
    <property type="entry name" value="UROD/MetE-like_sf"/>
</dbReference>
<dbReference type="InterPro" id="IPR006361">
    <property type="entry name" value="Uroporphyrinogen_deCO2ase_HemE"/>
</dbReference>
<dbReference type="InterPro" id="IPR000257">
    <property type="entry name" value="Uroporphyrinogen_deCOase"/>
</dbReference>
<dbReference type="NCBIfam" id="TIGR01464">
    <property type="entry name" value="hemE"/>
    <property type="match status" value="1"/>
</dbReference>
<dbReference type="PANTHER" id="PTHR21091">
    <property type="entry name" value="METHYLTETRAHYDROFOLATE:HOMOCYSTEINE METHYLTRANSFERASE RELATED"/>
    <property type="match status" value="1"/>
</dbReference>
<dbReference type="PANTHER" id="PTHR21091:SF169">
    <property type="entry name" value="UROPORPHYRINOGEN DECARBOXYLASE"/>
    <property type="match status" value="1"/>
</dbReference>
<dbReference type="Pfam" id="PF01208">
    <property type="entry name" value="URO-D"/>
    <property type="match status" value="1"/>
</dbReference>
<dbReference type="SUPFAM" id="SSF51726">
    <property type="entry name" value="UROD/MetE-like"/>
    <property type="match status" value="1"/>
</dbReference>
<dbReference type="PROSITE" id="PS00906">
    <property type="entry name" value="UROD_1"/>
    <property type="match status" value="1"/>
</dbReference>
<dbReference type="PROSITE" id="PS00907">
    <property type="entry name" value="UROD_2"/>
    <property type="match status" value="1"/>
</dbReference>
<organism>
    <name type="scientific">Corynebacterium diphtheriae (strain ATCC 700971 / NCTC 13129 / Biotype gravis)</name>
    <dbReference type="NCBI Taxonomy" id="257309"/>
    <lineage>
        <taxon>Bacteria</taxon>
        <taxon>Bacillati</taxon>
        <taxon>Actinomycetota</taxon>
        <taxon>Actinomycetes</taxon>
        <taxon>Mycobacteriales</taxon>
        <taxon>Corynebacteriaceae</taxon>
        <taxon>Corynebacterium</taxon>
    </lineage>
</organism>
<keyword id="KW-0963">Cytoplasm</keyword>
<keyword id="KW-0210">Decarboxylase</keyword>
<keyword id="KW-0456">Lyase</keyword>
<keyword id="KW-0627">Porphyrin biosynthesis</keyword>
<keyword id="KW-1185">Reference proteome</keyword>
<accession>Q6NJJ4</accession>
<evidence type="ECO:0000255" key="1">
    <source>
        <dbReference type="HAMAP-Rule" id="MF_00218"/>
    </source>
</evidence>
<reference key="1">
    <citation type="journal article" date="2003" name="Nucleic Acids Res.">
        <title>The complete genome sequence and analysis of Corynebacterium diphtheriae NCTC13129.</title>
        <authorList>
            <person name="Cerdeno-Tarraga A.-M."/>
            <person name="Efstratiou A."/>
            <person name="Dover L.G."/>
            <person name="Holden M.T.G."/>
            <person name="Pallen M.J."/>
            <person name="Bentley S.D."/>
            <person name="Besra G.S."/>
            <person name="Churcher C.M."/>
            <person name="James K.D."/>
            <person name="De Zoysa A."/>
            <person name="Chillingworth T."/>
            <person name="Cronin A."/>
            <person name="Dowd L."/>
            <person name="Feltwell T."/>
            <person name="Hamlin N."/>
            <person name="Holroyd S."/>
            <person name="Jagels K."/>
            <person name="Moule S."/>
            <person name="Quail M.A."/>
            <person name="Rabbinowitsch E."/>
            <person name="Rutherford K.M."/>
            <person name="Thomson N.R."/>
            <person name="Unwin L."/>
            <person name="Whitehead S."/>
            <person name="Barrell B.G."/>
            <person name="Parkhill J."/>
        </authorList>
    </citation>
    <scope>NUCLEOTIDE SEQUENCE [LARGE SCALE GENOMIC DNA]</scope>
    <source>
        <strain>ATCC 700971 / NCTC 13129 / Biotype gravis</strain>
    </source>
</reference>
<proteinExistence type="inferred from homology"/>
<feature type="chain" id="PRO_0000325634" description="Uroporphyrinogen decarboxylase">
    <location>
        <begin position="1"/>
        <end position="344"/>
    </location>
</feature>
<feature type="binding site" evidence="1">
    <location>
        <begin position="26"/>
        <end position="30"/>
    </location>
    <ligand>
        <name>substrate</name>
    </ligand>
</feature>
<feature type="binding site" evidence="1">
    <location>
        <position position="75"/>
    </location>
    <ligand>
        <name>substrate</name>
    </ligand>
</feature>
<feature type="binding site" evidence="1">
    <location>
        <position position="150"/>
    </location>
    <ligand>
        <name>substrate</name>
    </ligand>
</feature>
<feature type="binding site" evidence="1">
    <location>
        <position position="205"/>
    </location>
    <ligand>
        <name>substrate</name>
    </ligand>
</feature>
<feature type="binding site" evidence="1">
    <location>
        <position position="323"/>
    </location>
    <ligand>
        <name>substrate</name>
    </ligand>
</feature>
<feature type="site" description="Transition state stabilizer" evidence="1">
    <location>
        <position position="75"/>
    </location>
</feature>
<comment type="function">
    <text evidence="1">Catalyzes the decarboxylation of four acetate groups of uroporphyrinogen-III to yield coproporphyrinogen-III.</text>
</comment>
<comment type="catalytic activity">
    <reaction evidence="1">
        <text>uroporphyrinogen III + 4 H(+) = coproporphyrinogen III + 4 CO2</text>
        <dbReference type="Rhea" id="RHEA:19865"/>
        <dbReference type="ChEBI" id="CHEBI:15378"/>
        <dbReference type="ChEBI" id="CHEBI:16526"/>
        <dbReference type="ChEBI" id="CHEBI:57308"/>
        <dbReference type="ChEBI" id="CHEBI:57309"/>
        <dbReference type="EC" id="4.1.1.37"/>
    </reaction>
</comment>
<comment type="pathway">
    <text evidence="1">Porphyrin-containing compound metabolism; protoporphyrin-IX biosynthesis; coproporphyrinogen-III from 5-aminolevulinate: step 4/4.</text>
</comment>
<comment type="subunit">
    <text evidence="1">Homodimer.</text>
</comment>
<comment type="subcellular location">
    <subcellularLocation>
        <location evidence="1">Cytoplasm</location>
    </subcellularLocation>
</comment>
<comment type="similarity">
    <text evidence="1">Belongs to the uroporphyrinogen decarboxylase family.</text>
</comment>
<protein>
    <recommendedName>
        <fullName evidence="1">Uroporphyrinogen decarboxylase</fullName>
        <shortName evidence="1">UPD</shortName>
        <shortName evidence="1">URO-D</shortName>
        <ecNumber evidence="1">4.1.1.37</ecNumber>
    </recommendedName>
</protein>
<sequence>MVSMPNPILDAAAGVTPHRRPVWFMRQAGRSLPEYREIREGVSMLDSCFRPDMLAEITLQPVRRHDVDAAILFSDIVVPLKAAGVRVEIVPGRGPVMDHPLLTRQDIENLPILDHDVHEVAEGIGIIREELNDAQTLIGFAGAPFTLASYLVEGGPSKNHEKTKSLMHQDPESWHLLMRRLVPTIVQFLRTQIDAGVQAMQLFDSWAGFLSERDYREFVLPYSMEILAQVGDVPRIHFGVGTGELLTAMSEAGSEVVGVDWRVPLDVAAQRMVSPKVLQGNLDPAILFAGEDVMRREIARICAEADRAIAAGHATGHIFNLGHGVLPNTDPDAITRAVEIIHTF</sequence>
<gene>
    <name evidence="1" type="primary">hemE</name>
    <name type="ordered locus">DIP0407</name>
</gene>